<sequence>MSKEDMIEFSGTVAELLPNAMFRVKLDNDHIILAHTSGKMRKNRIRVLAGDRVNVEMTPYDLTKGRITFRFK</sequence>
<evidence type="ECO:0000255" key="1">
    <source>
        <dbReference type="HAMAP-Rule" id="MF_00075"/>
    </source>
</evidence>
<comment type="function">
    <text evidence="1">One of the essential components for the initiation of protein synthesis. Stabilizes the binding of IF-2 and IF-3 on the 30S subunit to which N-formylmethionyl-tRNA(fMet) subsequently binds. Helps modulate mRNA selection, yielding the 30S pre-initiation complex (PIC). Upon addition of the 50S ribosomal subunit IF-1, IF-2 and IF-3 are released leaving the mature 70S translation initiation complex.</text>
</comment>
<comment type="subunit">
    <text evidence="1">Component of the 30S ribosomal translation pre-initiation complex which assembles on the 30S ribosome in the order IF-2 and IF-3, IF-1 and N-formylmethionyl-tRNA(fMet); mRNA recruitment can occur at any time during PIC assembly.</text>
</comment>
<comment type="subcellular location">
    <subcellularLocation>
        <location evidence="1">Cytoplasm</location>
    </subcellularLocation>
</comment>
<comment type="similarity">
    <text evidence="1">Belongs to the IF-1 family.</text>
</comment>
<reference key="1">
    <citation type="submission" date="2007-05" db="EMBL/GenBank/DDBJ databases">
        <title>Complete sequence of chromosome of Acidiphilium cryptum JF-5.</title>
        <authorList>
            <consortium name="US DOE Joint Genome Institute"/>
            <person name="Copeland A."/>
            <person name="Lucas S."/>
            <person name="Lapidus A."/>
            <person name="Barry K."/>
            <person name="Detter J.C."/>
            <person name="Glavina del Rio T."/>
            <person name="Hammon N."/>
            <person name="Israni S."/>
            <person name="Dalin E."/>
            <person name="Tice H."/>
            <person name="Pitluck S."/>
            <person name="Sims D."/>
            <person name="Brettin T."/>
            <person name="Bruce D."/>
            <person name="Han C."/>
            <person name="Schmutz J."/>
            <person name="Larimer F."/>
            <person name="Land M."/>
            <person name="Hauser L."/>
            <person name="Kyrpides N."/>
            <person name="Kim E."/>
            <person name="Magnuson T."/>
            <person name="Richardson P."/>
        </authorList>
    </citation>
    <scope>NUCLEOTIDE SEQUENCE [LARGE SCALE GENOMIC DNA]</scope>
    <source>
        <strain>JF-5</strain>
    </source>
</reference>
<gene>
    <name evidence="1" type="primary">infA</name>
    <name type="ordered locus">Acry_2692</name>
</gene>
<dbReference type="EMBL" id="CP000697">
    <property type="protein sequence ID" value="ABQ31883.1"/>
    <property type="molecule type" value="Genomic_DNA"/>
</dbReference>
<dbReference type="RefSeq" id="WP_007423639.1">
    <property type="nucleotide sequence ID" value="NC_009484.1"/>
</dbReference>
<dbReference type="SMR" id="A5G201"/>
<dbReference type="STRING" id="349163.Acry_2692"/>
<dbReference type="KEGG" id="acr:Acry_2692"/>
<dbReference type="eggNOG" id="COG0361">
    <property type="taxonomic scope" value="Bacteria"/>
</dbReference>
<dbReference type="HOGENOM" id="CLU_151267_1_0_5"/>
<dbReference type="Proteomes" id="UP000000245">
    <property type="component" value="Chromosome"/>
</dbReference>
<dbReference type="GO" id="GO:0005829">
    <property type="term" value="C:cytosol"/>
    <property type="evidence" value="ECO:0007669"/>
    <property type="project" value="TreeGrafter"/>
</dbReference>
<dbReference type="GO" id="GO:0043022">
    <property type="term" value="F:ribosome binding"/>
    <property type="evidence" value="ECO:0007669"/>
    <property type="project" value="UniProtKB-UniRule"/>
</dbReference>
<dbReference type="GO" id="GO:0019843">
    <property type="term" value="F:rRNA binding"/>
    <property type="evidence" value="ECO:0007669"/>
    <property type="project" value="UniProtKB-UniRule"/>
</dbReference>
<dbReference type="GO" id="GO:0003743">
    <property type="term" value="F:translation initiation factor activity"/>
    <property type="evidence" value="ECO:0007669"/>
    <property type="project" value="UniProtKB-UniRule"/>
</dbReference>
<dbReference type="CDD" id="cd04451">
    <property type="entry name" value="S1_IF1"/>
    <property type="match status" value="1"/>
</dbReference>
<dbReference type="FunFam" id="2.40.50.140:FF:000002">
    <property type="entry name" value="Translation initiation factor IF-1"/>
    <property type="match status" value="1"/>
</dbReference>
<dbReference type="Gene3D" id="2.40.50.140">
    <property type="entry name" value="Nucleic acid-binding proteins"/>
    <property type="match status" value="1"/>
</dbReference>
<dbReference type="HAMAP" id="MF_00075">
    <property type="entry name" value="IF_1"/>
    <property type="match status" value="1"/>
</dbReference>
<dbReference type="InterPro" id="IPR012340">
    <property type="entry name" value="NA-bd_OB-fold"/>
</dbReference>
<dbReference type="InterPro" id="IPR006196">
    <property type="entry name" value="RNA-binding_domain_S1_IF1"/>
</dbReference>
<dbReference type="InterPro" id="IPR004368">
    <property type="entry name" value="TIF_IF1"/>
</dbReference>
<dbReference type="NCBIfam" id="TIGR00008">
    <property type="entry name" value="infA"/>
    <property type="match status" value="1"/>
</dbReference>
<dbReference type="PANTHER" id="PTHR33370">
    <property type="entry name" value="TRANSLATION INITIATION FACTOR IF-1, CHLOROPLASTIC"/>
    <property type="match status" value="1"/>
</dbReference>
<dbReference type="PANTHER" id="PTHR33370:SF1">
    <property type="entry name" value="TRANSLATION INITIATION FACTOR IF-1, CHLOROPLASTIC"/>
    <property type="match status" value="1"/>
</dbReference>
<dbReference type="Pfam" id="PF01176">
    <property type="entry name" value="eIF-1a"/>
    <property type="match status" value="1"/>
</dbReference>
<dbReference type="SUPFAM" id="SSF50249">
    <property type="entry name" value="Nucleic acid-binding proteins"/>
    <property type="match status" value="1"/>
</dbReference>
<dbReference type="PROSITE" id="PS50832">
    <property type="entry name" value="S1_IF1_TYPE"/>
    <property type="match status" value="1"/>
</dbReference>
<keyword id="KW-0963">Cytoplasm</keyword>
<keyword id="KW-0396">Initiation factor</keyword>
<keyword id="KW-0648">Protein biosynthesis</keyword>
<keyword id="KW-1185">Reference proteome</keyword>
<keyword id="KW-0694">RNA-binding</keyword>
<keyword id="KW-0699">rRNA-binding</keyword>
<proteinExistence type="inferred from homology"/>
<feature type="chain" id="PRO_0000338743" description="Translation initiation factor IF-1">
    <location>
        <begin position="1"/>
        <end position="72"/>
    </location>
</feature>
<feature type="domain" description="S1-like" evidence="1">
    <location>
        <begin position="1"/>
        <end position="72"/>
    </location>
</feature>
<protein>
    <recommendedName>
        <fullName evidence="1">Translation initiation factor IF-1</fullName>
    </recommendedName>
</protein>
<name>IF1_ACICJ</name>
<accession>A5G201</accession>
<organism>
    <name type="scientific">Acidiphilium cryptum (strain JF-5)</name>
    <dbReference type="NCBI Taxonomy" id="349163"/>
    <lineage>
        <taxon>Bacteria</taxon>
        <taxon>Pseudomonadati</taxon>
        <taxon>Pseudomonadota</taxon>
        <taxon>Alphaproteobacteria</taxon>
        <taxon>Acetobacterales</taxon>
        <taxon>Acidocellaceae</taxon>
        <taxon>Acidiphilium</taxon>
    </lineage>
</organism>